<protein>
    <recommendedName>
        <fullName evidence="7">Sodium- and chloride-dependent neutral and basic amino acid transporter B(0+)</fullName>
    </recommendedName>
    <alternativeName>
        <fullName>Amino acid transporter ATB0+</fullName>
    </alternativeName>
    <alternativeName>
        <fullName>Colonic system B0+ amino acid transporter CATB0+</fullName>
    </alternativeName>
    <alternativeName>
        <fullName>Solute carrier family 6 member 14</fullName>
    </alternativeName>
</protein>
<accession>Q9JMA9</accession>
<accession>Q91Y60</accession>
<accession>Q9D317</accession>
<accession>Q9R183</accession>
<name>S6A14_MOUSE</name>
<feature type="chain" id="PRO_0000214796" description="Sodium- and chloride-dependent neutral and basic amino acid transporter B(0+)">
    <location>
        <begin position="1"/>
        <end position="638"/>
    </location>
</feature>
<feature type="topological domain" description="Cytoplasmic" evidence="2">
    <location>
        <begin position="1"/>
        <end position="44"/>
    </location>
</feature>
<feature type="transmembrane region" description="Helical; Name=1" evidence="2">
    <location>
        <begin position="45"/>
        <end position="65"/>
    </location>
</feature>
<feature type="transmembrane region" description="Helical; Name=2" evidence="2">
    <location>
        <begin position="72"/>
        <end position="92"/>
    </location>
</feature>
<feature type="transmembrane region" description="Helical; Name=3" evidence="2">
    <location>
        <begin position="110"/>
        <end position="130"/>
    </location>
</feature>
<feature type="topological domain" description="Extracellular" evidence="2">
    <location>
        <begin position="131"/>
        <end position="230"/>
    </location>
</feature>
<feature type="transmembrane region" description="Helical; Name=4" evidence="2">
    <location>
        <begin position="231"/>
        <end position="251"/>
    </location>
</feature>
<feature type="transmembrane region" description="Helical; Name=5" evidence="2">
    <location>
        <begin position="257"/>
        <end position="277"/>
    </location>
</feature>
<feature type="transmembrane region" description="Helical; Name=6" evidence="2">
    <location>
        <begin position="311"/>
        <end position="331"/>
    </location>
</feature>
<feature type="transmembrane region" description="Helical; Name=7" evidence="2">
    <location>
        <begin position="344"/>
        <end position="364"/>
    </location>
</feature>
<feature type="transmembrane region" description="Helical; Name=8" evidence="2">
    <location>
        <begin position="395"/>
        <end position="415"/>
    </location>
</feature>
<feature type="transmembrane region" description="Helical; Name=9" evidence="2">
    <location>
        <begin position="453"/>
        <end position="473"/>
    </location>
</feature>
<feature type="transmembrane region" description="Helical; Name=10" evidence="2">
    <location>
        <begin position="476"/>
        <end position="496"/>
    </location>
</feature>
<feature type="transmembrane region" description="Helical; Name=11" evidence="2">
    <location>
        <begin position="524"/>
        <end position="544"/>
    </location>
</feature>
<feature type="transmembrane region" description="Helical; Name=12" evidence="2">
    <location>
        <begin position="559"/>
        <end position="579"/>
    </location>
</feature>
<feature type="topological domain" description="Cytoplasmic" evidence="2">
    <location>
        <begin position="580"/>
        <end position="638"/>
    </location>
</feature>
<feature type="region of interest" description="Disordered" evidence="3">
    <location>
        <begin position="618"/>
        <end position="638"/>
    </location>
</feature>
<feature type="compositionally biased region" description="Basic and acidic residues" evidence="3">
    <location>
        <begin position="618"/>
        <end position="628"/>
    </location>
</feature>
<feature type="glycosylation site" description="N-linked (GlcNAc...) asparagine" evidence="2">
    <location>
        <position position="155"/>
    </location>
</feature>
<feature type="glycosylation site" description="N-linked (GlcNAc...) asparagine" evidence="2">
    <location>
        <position position="163"/>
    </location>
</feature>
<feature type="glycosylation site" description="N-linked (GlcNAc...) asparagine" evidence="2">
    <location>
        <position position="174"/>
    </location>
</feature>
<feature type="glycosylation site" description="N-linked (GlcNAc...) asparagine" evidence="2">
    <location>
        <position position="185"/>
    </location>
</feature>
<feature type="glycosylation site" description="N-linked (GlcNAc...) asparagine" evidence="2">
    <location>
        <position position="193"/>
    </location>
</feature>
<feature type="glycosylation site" description="N-linked (GlcNAc...) asparagine" evidence="2">
    <location>
        <position position="198"/>
    </location>
</feature>
<feature type="glycosylation site" description="N-linked (GlcNAc...) asparagine" evidence="2">
    <location>
        <position position="298"/>
    </location>
</feature>
<feature type="sequence conflict" description="In Ref. 3; AAD49320." evidence="7" ref="3">
    <original>F</original>
    <variation>V</variation>
    <location>
        <position position="90"/>
    </location>
</feature>
<feature type="sequence conflict" description="In Ref. 3; AAD49320." evidence="7" ref="3">
    <original>L</original>
    <variation>P</variation>
    <location>
        <position position="123"/>
    </location>
</feature>
<feature type="sequence conflict" description="In Ref. 2; AAK43541." evidence="7" ref="2">
    <original>N</original>
    <variation>S</variation>
    <location>
        <position position="192"/>
    </location>
</feature>
<feature type="sequence conflict" description="In Ref. 3; AAD49320." evidence="7" ref="3">
    <original>W</original>
    <variation>C</variation>
    <location>
        <position position="323"/>
    </location>
</feature>
<feature type="sequence conflict" description="In Ref. 3; AAD49320." evidence="7" ref="3">
    <original>S</original>
    <variation>P</variation>
    <location>
        <position position="341"/>
    </location>
</feature>
<feature type="sequence conflict" description="In Ref. 3; AAD49320." evidence="7" ref="3">
    <original>N</original>
    <variation>K</variation>
    <location>
        <position position="350"/>
    </location>
</feature>
<feature type="sequence conflict" description="In Ref. 4; BAB31272." evidence="7" ref="4">
    <original>R</original>
    <variation>I</variation>
    <location>
        <position position="597"/>
    </location>
</feature>
<dbReference type="EMBL" id="AB033285">
    <property type="protein sequence ID" value="BAA94300.1"/>
    <property type="molecule type" value="mRNA"/>
</dbReference>
<dbReference type="EMBL" id="AF320226">
    <property type="protein sequence ID" value="AAK43541.1"/>
    <property type="molecule type" value="mRNA"/>
</dbReference>
<dbReference type="EMBL" id="AF161714">
    <property type="protein sequence ID" value="AAD49320.1"/>
    <property type="molecule type" value="mRNA"/>
</dbReference>
<dbReference type="EMBL" id="AK018553">
    <property type="protein sequence ID" value="BAB31272.1"/>
    <property type="molecule type" value="mRNA"/>
</dbReference>
<dbReference type="CCDS" id="CCDS30051.1"/>
<dbReference type="RefSeq" id="NP_064433.3">
    <property type="nucleotide sequence ID" value="NM_020049.4"/>
</dbReference>
<dbReference type="SMR" id="Q9JMA9"/>
<dbReference type="FunCoup" id="Q9JMA9">
    <property type="interactions" value="36"/>
</dbReference>
<dbReference type="STRING" id="10090.ENSMUSP00000033414"/>
<dbReference type="GlyCosmos" id="Q9JMA9">
    <property type="glycosylation" value="7 sites, No reported glycans"/>
</dbReference>
<dbReference type="GlyGen" id="Q9JMA9">
    <property type="glycosylation" value="7 sites"/>
</dbReference>
<dbReference type="iPTMnet" id="Q9JMA9"/>
<dbReference type="PhosphoSitePlus" id="Q9JMA9"/>
<dbReference type="SwissPalm" id="Q9JMA9"/>
<dbReference type="PaxDb" id="10090-ENSMUSP00000033414"/>
<dbReference type="ProteomicsDB" id="253390"/>
<dbReference type="DNASU" id="56774"/>
<dbReference type="Ensembl" id="ENSMUST00000033414.8">
    <property type="protein sequence ID" value="ENSMUSP00000033414.8"/>
    <property type="gene ID" value="ENSMUSG00000031089.8"/>
</dbReference>
<dbReference type="GeneID" id="56774"/>
<dbReference type="KEGG" id="mmu:56774"/>
<dbReference type="UCSC" id="uc009sur.2">
    <property type="organism name" value="mouse"/>
</dbReference>
<dbReference type="AGR" id="MGI:1890216"/>
<dbReference type="CTD" id="11254"/>
<dbReference type="MGI" id="MGI:1890216">
    <property type="gene designation" value="Slc6a14"/>
</dbReference>
<dbReference type="VEuPathDB" id="HostDB:ENSMUSG00000031089"/>
<dbReference type="eggNOG" id="KOG3660">
    <property type="taxonomic scope" value="Eukaryota"/>
</dbReference>
<dbReference type="GeneTree" id="ENSGT00940000159688"/>
<dbReference type="HOGENOM" id="CLU_006855_4_1_1"/>
<dbReference type="InParanoid" id="Q9JMA9"/>
<dbReference type="OMA" id="APNWGPY"/>
<dbReference type="OrthoDB" id="6581954at2759"/>
<dbReference type="PhylomeDB" id="Q9JMA9"/>
<dbReference type="TreeFam" id="TF343812"/>
<dbReference type="Reactome" id="R-MMU-352230">
    <property type="pathway name" value="Amino acid transport across the plasma membrane"/>
</dbReference>
<dbReference type="Reactome" id="R-MMU-442660">
    <property type="pathway name" value="Na+/Cl- dependent neurotransmitter transporters"/>
</dbReference>
<dbReference type="BioGRID-ORCS" id="56774">
    <property type="hits" value="2 hits in 80 CRISPR screens"/>
</dbReference>
<dbReference type="PRO" id="PR:Q9JMA9"/>
<dbReference type="Proteomes" id="UP000000589">
    <property type="component" value="Chromosome X"/>
</dbReference>
<dbReference type="RNAct" id="Q9JMA9">
    <property type="molecule type" value="protein"/>
</dbReference>
<dbReference type="Bgee" id="ENSMUSG00000031089">
    <property type="expression patterns" value="Expressed in left colon and 66 other cell types or tissues"/>
</dbReference>
<dbReference type="ExpressionAtlas" id="Q9JMA9">
    <property type="expression patterns" value="baseline and differential"/>
</dbReference>
<dbReference type="GO" id="GO:0016324">
    <property type="term" value="C:apical plasma membrane"/>
    <property type="evidence" value="ECO:0000314"/>
    <property type="project" value="UniProtKB"/>
</dbReference>
<dbReference type="GO" id="GO:0031526">
    <property type="term" value="C:brush border membrane"/>
    <property type="evidence" value="ECO:0007669"/>
    <property type="project" value="Ensembl"/>
</dbReference>
<dbReference type="GO" id="GO:0005886">
    <property type="term" value="C:plasma membrane"/>
    <property type="evidence" value="ECO:0000250"/>
    <property type="project" value="MGI"/>
</dbReference>
<dbReference type="GO" id="GO:1901235">
    <property type="term" value="F:(R)-carnitine transmembrane transporter activity"/>
    <property type="evidence" value="ECO:0000314"/>
    <property type="project" value="UniProtKB"/>
</dbReference>
<dbReference type="GO" id="GO:0005275">
    <property type="term" value="F:amine transmembrane transporter activity"/>
    <property type="evidence" value="ECO:0000250"/>
    <property type="project" value="MGI"/>
</dbReference>
<dbReference type="GO" id="GO:0001761">
    <property type="term" value="F:beta-alanine transmembrane transporter activity"/>
    <property type="evidence" value="ECO:0000250"/>
    <property type="project" value="UniProtKB"/>
</dbReference>
<dbReference type="GO" id="GO:0015374">
    <property type="term" value="F:neutral, basic amino acid:sodium:chloride symporter activity"/>
    <property type="evidence" value="ECO:0000250"/>
    <property type="project" value="UniProtKB"/>
</dbReference>
<dbReference type="GO" id="GO:1902270">
    <property type="term" value="P:(R)-carnitine transmembrane transport"/>
    <property type="evidence" value="ECO:0000314"/>
    <property type="project" value="UniProtKB"/>
</dbReference>
<dbReference type="GO" id="GO:0089718">
    <property type="term" value="P:amino acid import across plasma membrane"/>
    <property type="evidence" value="ECO:0000250"/>
    <property type="project" value="UniProtKB"/>
</dbReference>
<dbReference type="GO" id="GO:0001762">
    <property type="term" value="P:beta-alanine transport"/>
    <property type="evidence" value="ECO:0000250"/>
    <property type="project" value="UniProtKB"/>
</dbReference>
<dbReference type="InterPro" id="IPR000175">
    <property type="entry name" value="Na/ntran_symport"/>
</dbReference>
<dbReference type="InterPro" id="IPR037272">
    <property type="entry name" value="SNS_sf"/>
</dbReference>
<dbReference type="PANTHER" id="PTHR11616:SF286">
    <property type="entry name" value="SODIUM- AND CHLORIDE-DEPENDENT NEUTRAL AND BASIC AMINO ACID TRANSPORTER B(0+)"/>
    <property type="match status" value="1"/>
</dbReference>
<dbReference type="PANTHER" id="PTHR11616">
    <property type="entry name" value="SODIUM/CHLORIDE DEPENDENT TRANSPORTER"/>
    <property type="match status" value="1"/>
</dbReference>
<dbReference type="Pfam" id="PF00209">
    <property type="entry name" value="SNF"/>
    <property type="match status" value="1"/>
</dbReference>
<dbReference type="PRINTS" id="PR00176">
    <property type="entry name" value="NANEUSMPORT"/>
</dbReference>
<dbReference type="SUPFAM" id="SSF161070">
    <property type="entry name" value="SNF-like"/>
    <property type="match status" value="1"/>
</dbReference>
<dbReference type="PROSITE" id="PS00610">
    <property type="entry name" value="NA_NEUROTRAN_SYMP_1"/>
    <property type="match status" value="1"/>
</dbReference>
<dbReference type="PROSITE" id="PS00754">
    <property type="entry name" value="NA_NEUROTRAN_SYMP_2"/>
    <property type="match status" value="1"/>
</dbReference>
<dbReference type="PROSITE" id="PS50267">
    <property type="entry name" value="NA_NEUROTRAN_SYMP_3"/>
    <property type="match status" value="1"/>
</dbReference>
<evidence type="ECO:0000250" key="1">
    <source>
        <dbReference type="UniProtKB" id="Q9UN76"/>
    </source>
</evidence>
<evidence type="ECO:0000255" key="2"/>
<evidence type="ECO:0000256" key="3">
    <source>
        <dbReference type="SAM" id="MobiDB-lite"/>
    </source>
</evidence>
<evidence type="ECO:0000269" key="4">
    <source>
    </source>
</evidence>
<evidence type="ECO:0000269" key="5">
    <source>
    </source>
</evidence>
<evidence type="ECO:0000269" key="6">
    <source>
    </source>
</evidence>
<evidence type="ECO:0000305" key="7"/>
<evidence type="ECO:0000305" key="8">
    <source>
    </source>
</evidence>
<evidence type="ECO:0000312" key="9">
    <source>
        <dbReference type="MGI" id="MGI:1890216"/>
    </source>
</evidence>
<proteinExistence type="evidence at protein level"/>
<sequence length="638" mass="71456">MDRLKCPNFFKCRQKEKVTASSENFHVGENDENQERGNWSKKSDYLLSMVGYAVGLGNVWRFPYLTYTNGGGAFLIPYAIMLALAGLPLFFLECSLGQFASLGPVSVWRILPLFQGVGITMVLISVFVAIYYNVIIAYSLYYLFASFQSVLPWANCSSWADENCSRTPIVTGCNVSIGAGEMFMNISWVNTNNLTCLNGSEVFRPGQLPSEQYWDKVTLQRSSGMDETGVVVWYLALCLLLAWLIVGAALFKGIKSSGKVVYFTALFPYVVLLILLIRGATLEGASKGISYYIGAQSNFTKLREAEVWKDAATQIFYSLSVAWGGLVALSSYNKFNNNCYSDAIIVCLTNCLTSVFAGFAIFSILGHMAHISGKEVSQVVKSGFDLAFIAYPEALAQLPAGPFWSILFFFMLLTLGLDSQFASIETITTTFQDLFPKAMKRMRVPITLGCCLILFLLGLLCVTQAGIYWVHLIDHFCAGWGILIAAILEIAGIIWIYGGNRFIEDIEMMIGAKRWIFWLWWRACWFVITPILLSAILVWSLVKFHRPDYADIPYPDWGVALGWCMIIFCIIWIPIMAIIKIVQAEGNILQRIISCCRPASNWGPYLEKHRGERYRDMAEPAKETDHEIPTISGSTKPE</sequence>
<organism>
    <name type="scientific">Mus musculus</name>
    <name type="common">Mouse</name>
    <dbReference type="NCBI Taxonomy" id="10090"/>
    <lineage>
        <taxon>Eukaryota</taxon>
        <taxon>Metazoa</taxon>
        <taxon>Chordata</taxon>
        <taxon>Craniata</taxon>
        <taxon>Vertebrata</taxon>
        <taxon>Euteleostomi</taxon>
        <taxon>Mammalia</taxon>
        <taxon>Eutheria</taxon>
        <taxon>Euarchontoglires</taxon>
        <taxon>Glires</taxon>
        <taxon>Rodentia</taxon>
        <taxon>Myomorpha</taxon>
        <taxon>Muroidea</taxon>
        <taxon>Muridae</taxon>
        <taxon>Murinae</taxon>
        <taxon>Mus</taxon>
        <taxon>Mus</taxon>
    </lineage>
</organism>
<gene>
    <name evidence="9" type="primary">Slc6a14</name>
</gene>
<comment type="function">
    <text evidence="1 4 5 6">Amino acid transporter that plays an important role in the absorption of amino acids in the intestinal tract. Mediates the uptake of a broad range of neutral and cationic amino acids (with the exception of proline) in a Na(+)/Cl(-)-dependent manner (PubMed:11306607, PubMed:11447016). Transports non-alpha-amino acids such as beta-alanine with low affinity, and has a higher affinity for dipolar and cationic amino acids such as leucine and lysine (By similarity). Can also transport carnitine, butyrylcarnitine and propionylcarnitine coupled to the transmembrane gradients of Na(+) and Cl(-) (PubMed:11306651).</text>
</comment>
<comment type="catalytic activity">
    <reaction evidence="4 6">
        <text>glycine(out) + chloride(out) + 2 Na(+)(out) = glycine(in) + chloride(in) + 2 Na(+)(in)</text>
        <dbReference type="Rhea" id="RHEA:70691"/>
        <dbReference type="ChEBI" id="CHEBI:17996"/>
        <dbReference type="ChEBI" id="CHEBI:29101"/>
        <dbReference type="ChEBI" id="CHEBI:57305"/>
    </reaction>
</comment>
<comment type="catalytic activity">
    <reaction evidence="1">
        <text>L-leucine(out) + chloride(out) + 2 Na(+)(out) = L-leucine(in) + chloride(in) + 2 Na(+)(in)</text>
        <dbReference type="Rhea" id="RHEA:71279"/>
        <dbReference type="ChEBI" id="CHEBI:17996"/>
        <dbReference type="ChEBI" id="CHEBI:29101"/>
        <dbReference type="ChEBI" id="CHEBI:57427"/>
    </reaction>
</comment>
<comment type="catalytic activity">
    <reaction evidence="1">
        <text>L-glutamine(out) + chloride(out) + 2 Na(+)(out) = L-glutamine(in) + chloride(in) + 2 Na(+)(in)</text>
        <dbReference type="Rhea" id="RHEA:71283"/>
        <dbReference type="ChEBI" id="CHEBI:17996"/>
        <dbReference type="ChEBI" id="CHEBI:29101"/>
        <dbReference type="ChEBI" id="CHEBI:58359"/>
    </reaction>
</comment>
<comment type="catalytic activity">
    <reaction evidence="1">
        <text>L-arginine(out) + chloride(out) + 2 Na(+)(out) = L-arginine(in) + chloride(in) + 2 Na(+)(in)</text>
        <dbReference type="Rhea" id="RHEA:71287"/>
        <dbReference type="ChEBI" id="CHEBI:17996"/>
        <dbReference type="ChEBI" id="CHEBI:29101"/>
        <dbReference type="ChEBI" id="CHEBI:32682"/>
    </reaction>
</comment>
<comment type="catalytic activity">
    <reaction evidence="5">
        <text>(R)-carnitine(out) + chloride(out) + 2 Na(+)(out) = (R)-carnitine(in) + chloride(in) + 2 Na(+)(in)</text>
        <dbReference type="Rhea" id="RHEA:71291"/>
        <dbReference type="ChEBI" id="CHEBI:16347"/>
        <dbReference type="ChEBI" id="CHEBI:17996"/>
        <dbReference type="ChEBI" id="CHEBI:29101"/>
    </reaction>
</comment>
<comment type="catalytic activity">
    <reaction evidence="5">
        <text>O-propanoyl-(R)-carnitine(out) + chloride(out) + 2 Na(+)(out) = O-propanoyl-(R)-carnitine(in) + chloride(in) + 2 Na(+)(in)</text>
        <dbReference type="Rhea" id="RHEA:71295"/>
        <dbReference type="ChEBI" id="CHEBI:17996"/>
        <dbReference type="ChEBI" id="CHEBI:29101"/>
        <dbReference type="ChEBI" id="CHEBI:53210"/>
    </reaction>
</comment>
<comment type="catalytic activity">
    <reaction evidence="1">
        <text>L-isoleucine(out) + chloride(out) + 2 Na(+)(out) = L-isoleucine(in) + chloride(in) + 2 Na(+)(in)</text>
        <dbReference type="Rhea" id="RHEA:71299"/>
        <dbReference type="ChEBI" id="CHEBI:17996"/>
        <dbReference type="ChEBI" id="CHEBI:29101"/>
        <dbReference type="ChEBI" id="CHEBI:58045"/>
    </reaction>
</comment>
<comment type="catalytic activity">
    <reaction evidence="1">
        <text>L-methionine(out) + chloride(out) + 2 Na(+)(out) = L-methionine(in) + chloride(in) + 2 Na(+)(in)</text>
        <dbReference type="Rhea" id="RHEA:71303"/>
        <dbReference type="ChEBI" id="CHEBI:17996"/>
        <dbReference type="ChEBI" id="CHEBI:29101"/>
        <dbReference type="ChEBI" id="CHEBI:57844"/>
    </reaction>
</comment>
<comment type="catalytic activity">
    <reaction evidence="1">
        <text>L-valine(out) + chloride(out) + 2 Na(+)(out) = L-valine(in) + chloride(in) + 2 Na(+)(in)</text>
        <dbReference type="Rhea" id="RHEA:71307"/>
        <dbReference type="ChEBI" id="CHEBI:17996"/>
        <dbReference type="ChEBI" id="CHEBI:29101"/>
        <dbReference type="ChEBI" id="CHEBI:57762"/>
    </reaction>
</comment>
<comment type="catalytic activity">
    <reaction evidence="1">
        <text>L-alanine(out) + chloride(out) + 2 Na(+)(out) = L-alanine(in) + chloride(in) + 2 Na(+)(in)</text>
        <dbReference type="Rhea" id="RHEA:71311"/>
        <dbReference type="ChEBI" id="CHEBI:17996"/>
        <dbReference type="ChEBI" id="CHEBI:29101"/>
        <dbReference type="ChEBI" id="CHEBI:57972"/>
    </reaction>
</comment>
<comment type="catalytic activity">
    <reaction evidence="1">
        <text>L-serine(out) + chloride(out) + 2 Na(+)(out) = L-serine(in) + chloride(in) + 2 Na(+)(in)</text>
        <dbReference type="Rhea" id="RHEA:71315"/>
        <dbReference type="ChEBI" id="CHEBI:17996"/>
        <dbReference type="ChEBI" id="CHEBI:29101"/>
        <dbReference type="ChEBI" id="CHEBI:33384"/>
    </reaction>
</comment>
<comment type="catalytic activity">
    <reaction evidence="1">
        <text>L-cysteine(out) + chloride(out) + 2 Na(+)(out) = L-cysteine(in) + chloride(in) + 2 Na(+)(in)</text>
        <dbReference type="Rhea" id="RHEA:71319"/>
        <dbReference type="ChEBI" id="CHEBI:17996"/>
        <dbReference type="ChEBI" id="CHEBI:29101"/>
        <dbReference type="ChEBI" id="CHEBI:35235"/>
    </reaction>
</comment>
<comment type="catalytic activity">
    <reaction evidence="1">
        <text>L-asparagine(out) + chloride(out) + 2 Na(+)(out) = L-asparagine(in) + chloride(in) + 2 Na(+)(in)</text>
        <dbReference type="Rhea" id="RHEA:71323"/>
        <dbReference type="ChEBI" id="CHEBI:17996"/>
        <dbReference type="ChEBI" id="CHEBI:29101"/>
        <dbReference type="ChEBI" id="CHEBI:58048"/>
    </reaction>
</comment>
<comment type="catalytic activity">
    <reaction evidence="1">
        <text>L-threonine(out) + chloride(out) + 2 Na(+)(out) = L-threonine(in) + chloride(in) + 2 Na(+)(in)</text>
        <dbReference type="Rhea" id="RHEA:71327"/>
        <dbReference type="ChEBI" id="CHEBI:17996"/>
        <dbReference type="ChEBI" id="CHEBI:29101"/>
        <dbReference type="ChEBI" id="CHEBI:57926"/>
    </reaction>
</comment>
<comment type="catalytic activity">
    <reaction evidence="1">
        <text>L-phenylalanine(out) + chloride(out) + 2 Na(+)(out) = L-phenylalanine(in) + chloride(in) + 2 Na(+)(in)</text>
        <dbReference type="Rhea" id="RHEA:71331"/>
        <dbReference type="ChEBI" id="CHEBI:17996"/>
        <dbReference type="ChEBI" id="CHEBI:29101"/>
        <dbReference type="ChEBI" id="CHEBI:58095"/>
    </reaction>
</comment>
<comment type="catalytic activity">
    <reaction evidence="1">
        <text>L-tryptophan(out) + chloride(out) + 2 Na(+)(out) = L-tryptophan(in) + chloride(in) + 2 Na(+)(in)</text>
        <dbReference type="Rhea" id="RHEA:71335"/>
        <dbReference type="ChEBI" id="CHEBI:17996"/>
        <dbReference type="ChEBI" id="CHEBI:29101"/>
        <dbReference type="ChEBI" id="CHEBI:57912"/>
    </reaction>
</comment>
<comment type="catalytic activity">
    <reaction evidence="1">
        <text>L-tyrosine(out) + chloride(out) + 2 Na(+)(out) = L-tyrosine(in) + chloride(in) + 2 Na(+)(in)</text>
        <dbReference type="Rhea" id="RHEA:71339"/>
        <dbReference type="ChEBI" id="CHEBI:17996"/>
        <dbReference type="ChEBI" id="CHEBI:29101"/>
        <dbReference type="ChEBI" id="CHEBI:58315"/>
    </reaction>
</comment>
<comment type="catalytic activity">
    <reaction evidence="1">
        <text>L-histidine(out) + chloride(out) + 2 Na(+)(out) = L-histidine(in) + chloride(in) + 2 Na(+)(in)</text>
        <dbReference type="Rhea" id="RHEA:71343"/>
        <dbReference type="ChEBI" id="CHEBI:17996"/>
        <dbReference type="ChEBI" id="CHEBI:29101"/>
        <dbReference type="ChEBI" id="CHEBI:57595"/>
    </reaction>
</comment>
<comment type="catalytic activity">
    <reaction evidence="1">
        <text>L-lysine(out) + chloride(out) + 2 Na(+)(out) = L-lysine(in) + chloride(in) + 2 Na(+)(in)</text>
        <dbReference type="Rhea" id="RHEA:71347"/>
        <dbReference type="ChEBI" id="CHEBI:17996"/>
        <dbReference type="ChEBI" id="CHEBI:29101"/>
        <dbReference type="ChEBI" id="CHEBI:32551"/>
    </reaction>
</comment>
<comment type="catalytic activity">
    <reaction evidence="1">
        <text>O-butanoyl-(R)-carnitine(out) + chloride(out) + 2 Na(+)(out) = O-butanoyl-(R)-carnitine(in) + chloride(in) + 2 Na(+)(in)</text>
        <dbReference type="Rhea" id="RHEA:72163"/>
        <dbReference type="ChEBI" id="CHEBI:17996"/>
        <dbReference type="ChEBI" id="CHEBI:21949"/>
        <dbReference type="ChEBI" id="CHEBI:29101"/>
    </reaction>
</comment>
<comment type="subcellular location">
    <subcellularLocation>
        <location evidence="8">Membrane</location>
        <topology evidence="2">Multi-pass membrane protein</topology>
    </subcellularLocation>
    <subcellularLocation>
        <location evidence="6">Apical cell membrane</location>
        <topology evidence="2">Multi-pass membrane protein</topology>
    </subcellularLocation>
</comment>
<comment type="tissue specificity">
    <text evidence="4 6">Expressed in the distal region of the intestinal tract: cecum and colon.</text>
</comment>
<comment type="similarity">
    <text evidence="7">Belongs to the sodium:neurotransmitter symporter (SNF) (TC 2.A.22) family. SLC6A14 subfamily.</text>
</comment>
<reference key="1">
    <citation type="journal article" date="2001" name="Am. J. Physiol.">
        <title>Characterization of a mouse colonic system B(0+) amino acid transporter related to amino acid absorption in colon.</title>
        <authorList>
            <person name="Ugawa S."/>
            <person name="Sunouchi Y."/>
            <person name="Ueda T."/>
            <person name="Takahashi E."/>
            <person name="Saishin Y."/>
            <person name="Shimada S."/>
        </authorList>
    </citation>
    <scope>NUCLEOTIDE SEQUENCE [MRNA]</scope>
    <scope>FUNCTION</scope>
    <scope>TISSUE SPECIFICITY</scope>
    <scope>SUBCELLULAR LOCATION</scope>
    <scope>TRANSPORTER ACTIVITY</scope>
    <source>
        <strain>ddY</strain>
    </source>
</reference>
<reference key="2">
    <citation type="journal article" date="2001" name="J. Clin. Invest.">
        <title>Na(+)- and Cl(-)-coupled active transport of nitric oxide synthase inhibitors via amino acid transport system B(0,+).</title>
        <authorList>
            <person name="Hatanaka T."/>
            <person name="Nakanishi T."/>
            <person name="Huang W."/>
            <person name="Leibach F.H."/>
            <person name="Prasad P.D."/>
            <person name="Ganapathy V."/>
            <person name="Ganapathy M.E."/>
        </authorList>
    </citation>
    <scope>NUCLEOTIDE SEQUENCE [MRNA]</scope>
    <scope>FUNCTION</scope>
    <scope>TISSUE SPECIFICITY</scope>
    <scope>TRANSPORTER ACTIVITY</scope>
    <source>
        <strain>C57BL/6J</strain>
        <tissue>Colon</tissue>
    </source>
</reference>
<reference key="3">
    <citation type="submission" date="1999-06" db="EMBL/GenBank/DDBJ databases">
        <authorList>
            <person name="Revell L."/>
            <person name="Sloan J.L."/>
            <person name="Mager S."/>
        </authorList>
    </citation>
    <scope>NUCLEOTIDE SEQUENCE [MRNA]</scope>
    <source>
        <strain>BALB/cJ</strain>
        <tissue>Lung</tissue>
    </source>
</reference>
<reference key="4">
    <citation type="journal article" date="2005" name="Science">
        <title>The transcriptional landscape of the mammalian genome.</title>
        <authorList>
            <person name="Carninci P."/>
            <person name="Kasukawa T."/>
            <person name="Katayama S."/>
            <person name="Gough J."/>
            <person name="Frith M.C."/>
            <person name="Maeda N."/>
            <person name="Oyama R."/>
            <person name="Ravasi T."/>
            <person name="Lenhard B."/>
            <person name="Wells C."/>
            <person name="Kodzius R."/>
            <person name="Shimokawa K."/>
            <person name="Bajic V.B."/>
            <person name="Brenner S.E."/>
            <person name="Batalov S."/>
            <person name="Forrest A.R."/>
            <person name="Zavolan M."/>
            <person name="Davis M.J."/>
            <person name="Wilming L.G."/>
            <person name="Aidinis V."/>
            <person name="Allen J.E."/>
            <person name="Ambesi-Impiombato A."/>
            <person name="Apweiler R."/>
            <person name="Aturaliya R.N."/>
            <person name="Bailey T.L."/>
            <person name="Bansal M."/>
            <person name="Baxter L."/>
            <person name="Beisel K.W."/>
            <person name="Bersano T."/>
            <person name="Bono H."/>
            <person name="Chalk A.M."/>
            <person name="Chiu K.P."/>
            <person name="Choudhary V."/>
            <person name="Christoffels A."/>
            <person name="Clutterbuck D.R."/>
            <person name="Crowe M.L."/>
            <person name="Dalla E."/>
            <person name="Dalrymple B.P."/>
            <person name="de Bono B."/>
            <person name="Della Gatta G."/>
            <person name="di Bernardo D."/>
            <person name="Down T."/>
            <person name="Engstrom P."/>
            <person name="Fagiolini M."/>
            <person name="Faulkner G."/>
            <person name="Fletcher C.F."/>
            <person name="Fukushima T."/>
            <person name="Furuno M."/>
            <person name="Futaki S."/>
            <person name="Gariboldi M."/>
            <person name="Georgii-Hemming P."/>
            <person name="Gingeras T.R."/>
            <person name="Gojobori T."/>
            <person name="Green R.E."/>
            <person name="Gustincich S."/>
            <person name="Harbers M."/>
            <person name="Hayashi Y."/>
            <person name="Hensch T.K."/>
            <person name="Hirokawa N."/>
            <person name="Hill D."/>
            <person name="Huminiecki L."/>
            <person name="Iacono M."/>
            <person name="Ikeo K."/>
            <person name="Iwama A."/>
            <person name="Ishikawa T."/>
            <person name="Jakt M."/>
            <person name="Kanapin A."/>
            <person name="Katoh M."/>
            <person name="Kawasawa Y."/>
            <person name="Kelso J."/>
            <person name="Kitamura H."/>
            <person name="Kitano H."/>
            <person name="Kollias G."/>
            <person name="Krishnan S.P."/>
            <person name="Kruger A."/>
            <person name="Kummerfeld S.K."/>
            <person name="Kurochkin I.V."/>
            <person name="Lareau L.F."/>
            <person name="Lazarevic D."/>
            <person name="Lipovich L."/>
            <person name="Liu J."/>
            <person name="Liuni S."/>
            <person name="McWilliam S."/>
            <person name="Madan Babu M."/>
            <person name="Madera M."/>
            <person name="Marchionni L."/>
            <person name="Matsuda H."/>
            <person name="Matsuzawa S."/>
            <person name="Miki H."/>
            <person name="Mignone F."/>
            <person name="Miyake S."/>
            <person name="Morris K."/>
            <person name="Mottagui-Tabar S."/>
            <person name="Mulder N."/>
            <person name="Nakano N."/>
            <person name="Nakauchi H."/>
            <person name="Ng P."/>
            <person name="Nilsson R."/>
            <person name="Nishiguchi S."/>
            <person name="Nishikawa S."/>
            <person name="Nori F."/>
            <person name="Ohara O."/>
            <person name="Okazaki Y."/>
            <person name="Orlando V."/>
            <person name="Pang K.C."/>
            <person name="Pavan W.J."/>
            <person name="Pavesi G."/>
            <person name="Pesole G."/>
            <person name="Petrovsky N."/>
            <person name="Piazza S."/>
            <person name="Reed J."/>
            <person name="Reid J.F."/>
            <person name="Ring B.Z."/>
            <person name="Ringwald M."/>
            <person name="Rost B."/>
            <person name="Ruan Y."/>
            <person name="Salzberg S.L."/>
            <person name="Sandelin A."/>
            <person name="Schneider C."/>
            <person name="Schoenbach C."/>
            <person name="Sekiguchi K."/>
            <person name="Semple C.A."/>
            <person name="Seno S."/>
            <person name="Sessa L."/>
            <person name="Sheng Y."/>
            <person name="Shibata Y."/>
            <person name="Shimada H."/>
            <person name="Shimada K."/>
            <person name="Silva D."/>
            <person name="Sinclair B."/>
            <person name="Sperling S."/>
            <person name="Stupka E."/>
            <person name="Sugiura K."/>
            <person name="Sultana R."/>
            <person name="Takenaka Y."/>
            <person name="Taki K."/>
            <person name="Tammoja K."/>
            <person name="Tan S.L."/>
            <person name="Tang S."/>
            <person name="Taylor M.S."/>
            <person name="Tegner J."/>
            <person name="Teichmann S.A."/>
            <person name="Ueda H.R."/>
            <person name="van Nimwegen E."/>
            <person name="Verardo R."/>
            <person name="Wei C.L."/>
            <person name="Yagi K."/>
            <person name="Yamanishi H."/>
            <person name="Zabarovsky E."/>
            <person name="Zhu S."/>
            <person name="Zimmer A."/>
            <person name="Hide W."/>
            <person name="Bult C."/>
            <person name="Grimmond S.M."/>
            <person name="Teasdale R.D."/>
            <person name="Liu E.T."/>
            <person name="Brusic V."/>
            <person name="Quackenbush J."/>
            <person name="Wahlestedt C."/>
            <person name="Mattick J.S."/>
            <person name="Hume D.A."/>
            <person name="Kai C."/>
            <person name="Sasaki D."/>
            <person name="Tomaru Y."/>
            <person name="Fukuda S."/>
            <person name="Kanamori-Katayama M."/>
            <person name="Suzuki M."/>
            <person name="Aoki J."/>
            <person name="Arakawa T."/>
            <person name="Iida J."/>
            <person name="Imamura K."/>
            <person name="Itoh M."/>
            <person name="Kato T."/>
            <person name="Kawaji H."/>
            <person name="Kawagashira N."/>
            <person name="Kawashima T."/>
            <person name="Kojima M."/>
            <person name="Kondo S."/>
            <person name="Konno H."/>
            <person name="Nakano K."/>
            <person name="Ninomiya N."/>
            <person name="Nishio T."/>
            <person name="Okada M."/>
            <person name="Plessy C."/>
            <person name="Shibata K."/>
            <person name="Shiraki T."/>
            <person name="Suzuki S."/>
            <person name="Tagami M."/>
            <person name="Waki K."/>
            <person name="Watahiki A."/>
            <person name="Okamura-Oho Y."/>
            <person name="Suzuki H."/>
            <person name="Kawai J."/>
            <person name="Hayashizaki Y."/>
        </authorList>
    </citation>
    <scope>NUCLEOTIDE SEQUENCE [LARGE SCALE MRNA]</scope>
    <source>
        <strain>C57BL/6J</strain>
        <tissue>Colon</tissue>
    </source>
</reference>
<reference key="5">
    <citation type="journal article" date="2010" name="Cell">
        <title>A tissue-specific atlas of mouse protein phosphorylation and expression.</title>
        <authorList>
            <person name="Huttlin E.L."/>
            <person name="Jedrychowski M.P."/>
            <person name="Elias J.E."/>
            <person name="Goswami T."/>
            <person name="Rad R."/>
            <person name="Beausoleil S.A."/>
            <person name="Villen J."/>
            <person name="Haas W."/>
            <person name="Sowa M.E."/>
            <person name="Gygi S.P."/>
        </authorList>
    </citation>
    <scope>IDENTIFICATION BY MASS SPECTROMETRY [LARGE SCALE ANALYSIS]</scope>
    <source>
        <tissue>Lung</tissue>
    </source>
</reference>
<reference key="6">
    <citation type="journal article" date="2001" name="J. Physiol. (Lond.)">
        <title>Na+- and Cl--coupled active transport of carnitine by the amino acid transporter ATB(0,+) from mouse colon expressed in HRPE cells and Xenopus oocytes.</title>
        <authorList>
            <person name="Nakanishi T."/>
            <person name="Hatanaka T."/>
            <person name="Huang W."/>
            <person name="Prasad P.D."/>
            <person name="Leibach F.H."/>
            <person name="Ganapathy M.E."/>
            <person name="Ganapathy V."/>
        </authorList>
    </citation>
    <scope>FUNCTION</scope>
    <scope>TRANSPORTER ACTIVITY</scope>
    <scope>BIOPHYSICOCHEMICAL PROPERTIES</scope>
    <scope>SUBCELLULAR LOCATION</scope>
</reference>
<keyword id="KW-0029">Amino-acid transport</keyword>
<keyword id="KW-1003">Cell membrane</keyword>
<keyword id="KW-0325">Glycoprotein</keyword>
<keyword id="KW-0472">Membrane</keyword>
<keyword id="KW-1185">Reference proteome</keyword>
<keyword id="KW-0769">Symport</keyword>
<keyword id="KW-0812">Transmembrane</keyword>
<keyword id="KW-1133">Transmembrane helix</keyword>
<keyword id="KW-0813">Transport</keyword>